<dbReference type="EC" id="1.7.-.-" evidence="1"/>
<dbReference type="EC" id="1.11.1.-" evidence="1"/>
<dbReference type="EMBL" id="AB271148">
    <property type="protein sequence ID" value="BAF03583.1"/>
    <property type="molecule type" value="mRNA"/>
</dbReference>
<dbReference type="PIR" id="A02501">
    <property type="entry name" value="MYWHK"/>
</dbReference>
<dbReference type="RefSeq" id="XP_007165766.1">
    <property type="nucleotide sequence ID" value="XM_007165704.2"/>
</dbReference>
<dbReference type="SMR" id="P02179"/>
<dbReference type="GeneID" id="103017865"/>
<dbReference type="KEGG" id="bacu:103017865"/>
<dbReference type="CTD" id="4151"/>
<dbReference type="OrthoDB" id="3363at9721"/>
<dbReference type="GO" id="GO:0070062">
    <property type="term" value="C:extracellular exosome"/>
    <property type="evidence" value="ECO:0007669"/>
    <property type="project" value="TreeGrafter"/>
</dbReference>
<dbReference type="GO" id="GO:0016528">
    <property type="term" value="C:sarcoplasm"/>
    <property type="evidence" value="ECO:0000250"/>
    <property type="project" value="UniProtKB"/>
</dbReference>
<dbReference type="GO" id="GO:0020037">
    <property type="term" value="F:heme binding"/>
    <property type="evidence" value="ECO:0007669"/>
    <property type="project" value="InterPro"/>
</dbReference>
<dbReference type="GO" id="GO:0046872">
    <property type="term" value="F:metal ion binding"/>
    <property type="evidence" value="ECO:0007669"/>
    <property type="project" value="UniProtKB-KW"/>
</dbReference>
<dbReference type="GO" id="GO:0098809">
    <property type="term" value="F:nitrite reductase activity"/>
    <property type="evidence" value="ECO:0000250"/>
    <property type="project" value="UniProtKB"/>
</dbReference>
<dbReference type="GO" id="GO:0019825">
    <property type="term" value="F:oxygen binding"/>
    <property type="evidence" value="ECO:0007669"/>
    <property type="project" value="InterPro"/>
</dbReference>
<dbReference type="GO" id="GO:0005344">
    <property type="term" value="F:oxygen carrier activity"/>
    <property type="evidence" value="ECO:0000250"/>
    <property type="project" value="UniProtKB"/>
</dbReference>
<dbReference type="GO" id="GO:0004601">
    <property type="term" value="F:peroxidase activity"/>
    <property type="evidence" value="ECO:0000250"/>
    <property type="project" value="UniProtKB"/>
</dbReference>
<dbReference type="GO" id="GO:0019430">
    <property type="term" value="P:removal of superoxide radicals"/>
    <property type="evidence" value="ECO:0000250"/>
    <property type="project" value="UniProtKB"/>
</dbReference>
<dbReference type="CDD" id="cd08926">
    <property type="entry name" value="Mb"/>
    <property type="match status" value="1"/>
</dbReference>
<dbReference type="Gene3D" id="6.10.140.2100">
    <property type="match status" value="1"/>
</dbReference>
<dbReference type="Gene3D" id="6.10.140.2110">
    <property type="match status" value="1"/>
</dbReference>
<dbReference type="InterPro" id="IPR000971">
    <property type="entry name" value="Globin"/>
</dbReference>
<dbReference type="InterPro" id="IPR009050">
    <property type="entry name" value="Globin-like_sf"/>
</dbReference>
<dbReference type="InterPro" id="IPR002335">
    <property type="entry name" value="Myoglobin"/>
</dbReference>
<dbReference type="PANTHER" id="PTHR47132">
    <property type="entry name" value="MYOGLOBIN"/>
    <property type="match status" value="1"/>
</dbReference>
<dbReference type="PANTHER" id="PTHR47132:SF1">
    <property type="entry name" value="MYOGLOBIN"/>
    <property type="match status" value="1"/>
</dbReference>
<dbReference type="Pfam" id="PF00042">
    <property type="entry name" value="Globin"/>
    <property type="match status" value="1"/>
</dbReference>
<dbReference type="PRINTS" id="PR00613">
    <property type="entry name" value="MYOGLOBIN"/>
</dbReference>
<dbReference type="SUPFAM" id="SSF46458">
    <property type="entry name" value="Globin-like"/>
    <property type="match status" value="1"/>
</dbReference>
<dbReference type="PROSITE" id="PS01033">
    <property type="entry name" value="GLOBIN"/>
    <property type="match status" value="1"/>
</dbReference>
<gene>
    <name type="primary">MB</name>
</gene>
<organism>
    <name type="scientific">Balaenoptera acutorostrata</name>
    <name type="common">Common minke whale</name>
    <name type="synonym">Balaena rostrata</name>
    <dbReference type="NCBI Taxonomy" id="9767"/>
    <lineage>
        <taxon>Eukaryota</taxon>
        <taxon>Metazoa</taxon>
        <taxon>Chordata</taxon>
        <taxon>Craniata</taxon>
        <taxon>Vertebrata</taxon>
        <taxon>Euteleostomi</taxon>
        <taxon>Mammalia</taxon>
        <taxon>Eutheria</taxon>
        <taxon>Laurasiatheria</taxon>
        <taxon>Artiodactyla</taxon>
        <taxon>Whippomorpha</taxon>
        <taxon>Cetacea</taxon>
        <taxon>Mysticeti</taxon>
        <taxon>Balaenopteridae</taxon>
        <taxon>Balaenoptera</taxon>
    </lineage>
</organism>
<protein>
    <recommendedName>
        <fullName>Myoglobin</fullName>
    </recommendedName>
    <alternativeName>
        <fullName evidence="1">Nitrite reductase MB</fullName>
        <ecNumber evidence="1">1.7.-.-</ecNumber>
    </alternativeName>
    <alternativeName>
        <fullName evidence="1">Pseudoperoxidase MB</fullName>
        <ecNumber evidence="1">1.11.1.-</ecNumber>
    </alternativeName>
</protein>
<reference key="1">
    <citation type="journal article" date="2006" name="Comp. Biochem. Physiol.">
        <title>cDNA-derived amino acid sequences of myoglobins from nine species of whales and dolphins.</title>
        <authorList>
            <person name="Iwanami K."/>
            <person name="Mita H."/>
            <person name="Yamamoto Y."/>
            <person name="Fujise Y."/>
            <person name="Yamada T."/>
            <person name="Suzuki T."/>
        </authorList>
    </citation>
    <scope>NUCLEOTIDE SEQUENCE [MRNA]</scope>
</reference>
<reference key="2">
    <citation type="journal article" date="1977" name="Biochemistry">
        <title>The complete amino acid sequence of the major component myoglobin from the arctic minke whale, Balaenoptera acutorostrata.</title>
        <authorList>
            <person name="Lehman L.D."/>
            <person name="Dwulet F.E."/>
            <person name="Bogardt R.A. Jr."/>
            <person name="Jones B.N."/>
            <person name="Gurd F.R.N."/>
        </authorList>
    </citation>
    <scope>PROTEIN SEQUENCE OF 2-154</scope>
    <source>
        <tissue>Skeletal muscle</tissue>
    </source>
</reference>
<name>MYG_BALAC</name>
<accession>P02179</accession>
<accession>Q0KIY4</accession>
<sequence>MVLSDAEWHLVLNIWAKVEADVAGHGQDILIRLFKGHPETLEKFDKFKHLKTEAEMKASEDLKKHGNTVLTALGGILKKKGHHEAELKPLAQSHATKHKIPIKYLEFISDAIIHVLHSRHPAEFGADAQAAMNKALELFRKDIAAKYKELGFQG</sequence>
<evidence type="ECO:0000250" key="1">
    <source>
        <dbReference type="UniProtKB" id="P02144"/>
    </source>
</evidence>
<evidence type="ECO:0000250" key="2">
    <source>
        <dbReference type="UniProtKB" id="P02185"/>
    </source>
</evidence>
<evidence type="ECO:0000250" key="3">
    <source>
        <dbReference type="UniProtKB" id="P02189"/>
    </source>
</evidence>
<evidence type="ECO:0000250" key="4">
    <source>
        <dbReference type="UniProtKB" id="P04247"/>
    </source>
</evidence>
<evidence type="ECO:0000250" key="5">
    <source>
        <dbReference type="UniProtKB" id="P68082"/>
    </source>
</evidence>
<evidence type="ECO:0000250" key="6">
    <source>
        <dbReference type="UniProtKB" id="Q9QZ76"/>
    </source>
</evidence>
<evidence type="ECO:0000255" key="7">
    <source>
        <dbReference type="PROSITE-ProRule" id="PRU00238"/>
    </source>
</evidence>
<evidence type="ECO:0000269" key="8">
    <source>
    </source>
</evidence>
<feature type="initiator methionine" description="Removed" evidence="8">
    <location>
        <position position="1"/>
    </location>
</feature>
<feature type="chain" id="PRO_0000053278" description="Myoglobin">
    <location>
        <begin position="2"/>
        <end position="154"/>
    </location>
</feature>
<feature type="domain" description="Globin" evidence="7">
    <location>
        <begin position="2"/>
        <end position="148"/>
    </location>
</feature>
<feature type="binding site" evidence="5">
    <location>
        <position position="65"/>
    </location>
    <ligand>
        <name>nitrite</name>
        <dbReference type="ChEBI" id="CHEBI:16301"/>
    </ligand>
</feature>
<feature type="binding site" evidence="3 7">
    <location>
        <position position="65"/>
    </location>
    <ligand>
        <name>O2</name>
        <dbReference type="ChEBI" id="CHEBI:15379"/>
    </ligand>
</feature>
<feature type="binding site" description="proximal binding residue" evidence="1">
    <location>
        <position position="94"/>
    </location>
    <ligand>
        <name>heme b</name>
        <dbReference type="ChEBI" id="CHEBI:60344"/>
    </ligand>
    <ligandPart>
        <name>Fe</name>
        <dbReference type="ChEBI" id="CHEBI:18248"/>
    </ligandPart>
</feature>
<feature type="modified residue" description="Phosphoserine" evidence="6">
    <location>
        <position position="4"/>
    </location>
</feature>
<feature type="modified residue" description="Phosphothreonine" evidence="4">
    <location>
        <position position="68"/>
    </location>
</feature>
<keyword id="KW-0963">Cytoplasm</keyword>
<keyword id="KW-0903">Direct protein sequencing</keyword>
<keyword id="KW-0349">Heme</keyword>
<keyword id="KW-0408">Iron</keyword>
<keyword id="KW-0479">Metal-binding</keyword>
<keyword id="KW-0514">Muscle protein</keyword>
<keyword id="KW-0560">Oxidoreductase</keyword>
<keyword id="KW-0561">Oxygen transport</keyword>
<keyword id="KW-0597">Phosphoprotein</keyword>
<keyword id="KW-0813">Transport</keyword>
<proteinExistence type="evidence at protein level"/>
<comment type="function">
    <text evidence="1">Monomeric heme protein which primary function is to store oxygen and facilitate its diffusion within muscle tissues. Reversibly binds oxygen through a pentacoordinated heme iron and enables its timely and efficient release as needed during periods of heightened demand. Depending on the oxidative conditions of tissues and cells, and in addition to its ability to bind oxygen, it also has a nitrite reductase activity whereby it regulates the production of bioactive nitric oxide. Under stress conditions, like hypoxia and anoxia, it also protects cells against reactive oxygen species thanks to its pseudoperoxidase activity.</text>
</comment>
<comment type="catalytic activity">
    <reaction evidence="1">
        <text>Fe(III)-heme b-[protein] + nitric oxide + H2O = Fe(II)-heme b-[protein] + nitrite + 2 H(+)</text>
        <dbReference type="Rhea" id="RHEA:77711"/>
        <dbReference type="Rhea" id="RHEA-COMP:18975"/>
        <dbReference type="Rhea" id="RHEA-COMP:18976"/>
        <dbReference type="ChEBI" id="CHEBI:15377"/>
        <dbReference type="ChEBI" id="CHEBI:15378"/>
        <dbReference type="ChEBI" id="CHEBI:16301"/>
        <dbReference type="ChEBI" id="CHEBI:16480"/>
        <dbReference type="ChEBI" id="CHEBI:55376"/>
        <dbReference type="ChEBI" id="CHEBI:60344"/>
    </reaction>
    <physiologicalReaction direction="right-to-left" evidence="1">
        <dbReference type="Rhea" id="RHEA:77713"/>
    </physiologicalReaction>
</comment>
<comment type="catalytic activity">
    <reaction evidence="1">
        <text>H2O2 + AH2 = A + 2 H2O</text>
        <dbReference type="Rhea" id="RHEA:30275"/>
        <dbReference type="ChEBI" id="CHEBI:13193"/>
        <dbReference type="ChEBI" id="CHEBI:15377"/>
        <dbReference type="ChEBI" id="CHEBI:16240"/>
        <dbReference type="ChEBI" id="CHEBI:17499"/>
    </reaction>
</comment>
<comment type="subunit">
    <text evidence="2">Monomeric.</text>
</comment>
<comment type="subcellular location">
    <subcellularLocation>
        <location evidence="1">Cytoplasm</location>
        <location evidence="1">Sarcoplasm</location>
    </subcellularLocation>
</comment>
<comment type="similarity">
    <text evidence="7">Belongs to the globin family.</text>
</comment>